<accession>Q02XG6</accession>
<proteinExistence type="inferred from homology"/>
<evidence type="ECO:0000255" key="1">
    <source>
        <dbReference type="HAMAP-Rule" id="MF_00176"/>
    </source>
</evidence>
<reference key="1">
    <citation type="journal article" date="2006" name="Proc. Natl. Acad. Sci. U.S.A.">
        <title>Comparative genomics of the lactic acid bacteria.</title>
        <authorList>
            <person name="Makarova K.S."/>
            <person name="Slesarev A."/>
            <person name="Wolf Y.I."/>
            <person name="Sorokin A."/>
            <person name="Mirkin B."/>
            <person name="Koonin E.V."/>
            <person name="Pavlov A."/>
            <person name="Pavlova N."/>
            <person name="Karamychev V."/>
            <person name="Polouchine N."/>
            <person name="Shakhova V."/>
            <person name="Grigoriev I."/>
            <person name="Lou Y."/>
            <person name="Rohksar D."/>
            <person name="Lucas S."/>
            <person name="Huang K."/>
            <person name="Goodstein D.M."/>
            <person name="Hawkins T."/>
            <person name="Plengvidhya V."/>
            <person name="Welker D."/>
            <person name="Hughes J."/>
            <person name="Goh Y."/>
            <person name="Benson A."/>
            <person name="Baldwin K."/>
            <person name="Lee J.-H."/>
            <person name="Diaz-Muniz I."/>
            <person name="Dosti B."/>
            <person name="Smeianov V."/>
            <person name="Wechter W."/>
            <person name="Barabote R."/>
            <person name="Lorca G."/>
            <person name="Altermann E."/>
            <person name="Barrangou R."/>
            <person name="Ganesan B."/>
            <person name="Xie Y."/>
            <person name="Rawsthorne H."/>
            <person name="Tamir D."/>
            <person name="Parker C."/>
            <person name="Breidt F."/>
            <person name="Broadbent J.R."/>
            <person name="Hutkins R."/>
            <person name="O'Sullivan D."/>
            <person name="Steele J."/>
            <person name="Unlu G."/>
            <person name="Saier M.H. Jr."/>
            <person name="Klaenhammer T."/>
            <person name="Richardson P."/>
            <person name="Kozyavkin S."/>
            <person name="Weimer B.C."/>
            <person name="Mills D.A."/>
        </authorList>
    </citation>
    <scope>NUCLEOTIDE SEQUENCE [LARGE SCALE GENOMIC DNA]</scope>
    <source>
        <strain>SK11</strain>
    </source>
</reference>
<sequence length="423" mass="47529">MLDIKKIRADFDGIAAKLATRGVEKEKLEKLHDLDIKRRELIVKSEALKAERNSVSDEISQVKRAKGDASTQIAAMQKVSAEIKAIDAELAEIEENLNEIIIMLPNLPHESTPIGADEDDNVEVRRVGQTPTFNFEPKAHWDLGEDLGILDWERGGKVTGSRFLFYKGAGARLERALYNFMLDEHGKEGYTEMITPYMVNQESMFGTGQYPKFKEDTFELKDDRGFVLIPTAEVPLTNYYRGEILDGSELPIKFTAMSPSFRSEAGSAGRDTRGLIRLHQFHKVEMVKFAKPDQSYDELEKMTANAENILQKLGLAYRVVALSTGDMGFSAAKTYDLEVWIPAQNTYREISSCSNCEDFQARRAQIRYRDEDGKVQLLHTLNGSGLAVGRTVAAILENYQNEDGSITVPEILRPYMGGLEVIK</sequence>
<name>SYS_LACLS</name>
<keyword id="KW-0030">Aminoacyl-tRNA synthetase</keyword>
<keyword id="KW-0067">ATP-binding</keyword>
<keyword id="KW-0963">Cytoplasm</keyword>
<keyword id="KW-0436">Ligase</keyword>
<keyword id="KW-0547">Nucleotide-binding</keyword>
<keyword id="KW-0648">Protein biosynthesis</keyword>
<feature type="chain" id="PRO_1000019712" description="Serine--tRNA ligase">
    <location>
        <begin position="1"/>
        <end position="423"/>
    </location>
</feature>
<feature type="binding site" evidence="1">
    <location>
        <begin position="231"/>
        <end position="233"/>
    </location>
    <ligand>
        <name>L-serine</name>
        <dbReference type="ChEBI" id="CHEBI:33384"/>
    </ligand>
</feature>
<feature type="binding site" evidence="1">
    <location>
        <begin position="262"/>
        <end position="264"/>
    </location>
    <ligand>
        <name>ATP</name>
        <dbReference type="ChEBI" id="CHEBI:30616"/>
    </ligand>
</feature>
<feature type="binding site" evidence="1">
    <location>
        <position position="285"/>
    </location>
    <ligand>
        <name>L-serine</name>
        <dbReference type="ChEBI" id="CHEBI:33384"/>
    </ligand>
</feature>
<feature type="binding site" evidence="1">
    <location>
        <begin position="349"/>
        <end position="352"/>
    </location>
    <ligand>
        <name>ATP</name>
        <dbReference type="ChEBI" id="CHEBI:30616"/>
    </ligand>
</feature>
<feature type="binding site" evidence="1">
    <location>
        <position position="384"/>
    </location>
    <ligand>
        <name>L-serine</name>
        <dbReference type="ChEBI" id="CHEBI:33384"/>
    </ligand>
</feature>
<gene>
    <name evidence="1" type="primary">serS</name>
    <name type="ordered locus">LACR_1870</name>
</gene>
<organism>
    <name type="scientific">Lactococcus lactis subsp. cremoris (strain SK11)</name>
    <dbReference type="NCBI Taxonomy" id="272622"/>
    <lineage>
        <taxon>Bacteria</taxon>
        <taxon>Bacillati</taxon>
        <taxon>Bacillota</taxon>
        <taxon>Bacilli</taxon>
        <taxon>Lactobacillales</taxon>
        <taxon>Streptococcaceae</taxon>
        <taxon>Lactococcus</taxon>
        <taxon>Lactococcus cremoris subsp. cremoris</taxon>
    </lineage>
</organism>
<comment type="function">
    <text evidence="1">Catalyzes the attachment of serine to tRNA(Ser). Is also able to aminoacylate tRNA(Sec) with serine, to form the misacylated tRNA L-seryl-tRNA(Sec), which will be further converted into selenocysteinyl-tRNA(Sec).</text>
</comment>
<comment type="catalytic activity">
    <reaction evidence="1">
        <text>tRNA(Ser) + L-serine + ATP = L-seryl-tRNA(Ser) + AMP + diphosphate + H(+)</text>
        <dbReference type="Rhea" id="RHEA:12292"/>
        <dbReference type="Rhea" id="RHEA-COMP:9669"/>
        <dbReference type="Rhea" id="RHEA-COMP:9703"/>
        <dbReference type="ChEBI" id="CHEBI:15378"/>
        <dbReference type="ChEBI" id="CHEBI:30616"/>
        <dbReference type="ChEBI" id="CHEBI:33019"/>
        <dbReference type="ChEBI" id="CHEBI:33384"/>
        <dbReference type="ChEBI" id="CHEBI:78442"/>
        <dbReference type="ChEBI" id="CHEBI:78533"/>
        <dbReference type="ChEBI" id="CHEBI:456215"/>
        <dbReference type="EC" id="6.1.1.11"/>
    </reaction>
</comment>
<comment type="catalytic activity">
    <reaction evidence="1">
        <text>tRNA(Sec) + L-serine + ATP = L-seryl-tRNA(Sec) + AMP + diphosphate + H(+)</text>
        <dbReference type="Rhea" id="RHEA:42580"/>
        <dbReference type="Rhea" id="RHEA-COMP:9742"/>
        <dbReference type="Rhea" id="RHEA-COMP:10128"/>
        <dbReference type="ChEBI" id="CHEBI:15378"/>
        <dbReference type="ChEBI" id="CHEBI:30616"/>
        <dbReference type="ChEBI" id="CHEBI:33019"/>
        <dbReference type="ChEBI" id="CHEBI:33384"/>
        <dbReference type="ChEBI" id="CHEBI:78442"/>
        <dbReference type="ChEBI" id="CHEBI:78533"/>
        <dbReference type="ChEBI" id="CHEBI:456215"/>
        <dbReference type="EC" id="6.1.1.11"/>
    </reaction>
</comment>
<comment type="pathway">
    <text evidence="1">Aminoacyl-tRNA biosynthesis; selenocysteinyl-tRNA(Sec) biosynthesis; L-seryl-tRNA(Sec) from L-serine and tRNA(Sec): step 1/1.</text>
</comment>
<comment type="subunit">
    <text evidence="1">Homodimer. The tRNA molecule binds across the dimer.</text>
</comment>
<comment type="subcellular location">
    <subcellularLocation>
        <location evidence="1">Cytoplasm</location>
    </subcellularLocation>
</comment>
<comment type="domain">
    <text evidence="1">Consists of two distinct domains, a catalytic core and a N-terminal extension that is involved in tRNA binding.</text>
</comment>
<comment type="similarity">
    <text evidence="1">Belongs to the class-II aminoacyl-tRNA synthetase family. Type-1 seryl-tRNA synthetase subfamily.</text>
</comment>
<protein>
    <recommendedName>
        <fullName evidence="1">Serine--tRNA ligase</fullName>
        <ecNumber evidence="1">6.1.1.11</ecNumber>
    </recommendedName>
    <alternativeName>
        <fullName evidence="1">Seryl-tRNA synthetase</fullName>
        <shortName evidence="1">SerRS</shortName>
    </alternativeName>
    <alternativeName>
        <fullName evidence="1">Seryl-tRNA(Ser/Sec) synthetase</fullName>
    </alternativeName>
</protein>
<dbReference type="EC" id="6.1.1.11" evidence="1"/>
<dbReference type="EMBL" id="CP000425">
    <property type="protein sequence ID" value="ABJ73356.1"/>
    <property type="molecule type" value="Genomic_DNA"/>
</dbReference>
<dbReference type="RefSeq" id="WP_011676705.1">
    <property type="nucleotide sequence ID" value="NC_008527.1"/>
</dbReference>
<dbReference type="SMR" id="Q02XG6"/>
<dbReference type="KEGG" id="llc:LACR_1870"/>
<dbReference type="HOGENOM" id="CLU_023797_1_1_9"/>
<dbReference type="UniPathway" id="UPA00906">
    <property type="reaction ID" value="UER00895"/>
</dbReference>
<dbReference type="Proteomes" id="UP000000240">
    <property type="component" value="Chromosome"/>
</dbReference>
<dbReference type="GO" id="GO:0005737">
    <property type="term" value="C:cytoplasm"/>
    <property type="evidence" value="ECO:0007669"/>
    <property type="project" value="UniProtKB-SubCell"/>
</dbReference>
<dbReference type="GO" id="GO:0005524">
    <property type="term" value="F:ATP binding"/>
    <property type="evidence" value="ECO:0007669"/>
    <property type="project" value="UniProtKB-UniRule"/>
</dbReference>
<dbReference type="GO" id="GO:0140096">
    <property type="term" value="F:catalytic activity, acting on a protein"/>
    <property type="evidence" value="ECO:0007669"/>
    <property type="project" value="UniProtKB-ARBA"/>
</dbReference>
<dbReference type="GO" id="GO:0004828">
    <property type="term" value="F:serine-tRNA ligase activity"/>
    <property type="evidence" value="ECO:0007669"/>
    <property type="project" value="UniProtKB-UniRule"/>
</dbReference>
<dbReference type="GO" id="GO:0016740">
    <property type="term" value="F:transferase activity"/>
    <property type="evidence" value="ECO:0007669"/>
    <property type="project" value="UniProtKB-ARBA"/>
</dbReference>
<dbReference type="GO" id="GO:0016260">
    <property type="term" value="P:selenocysteine biosynthetic process"/>
    <property type="evidence" value="ECO:0007669"/>
    <property type="project" value="UniProtKB-UniRule"/>
</dbReference>
<dbReference type="GO" id="GO:0006434">
    <property type="term" value="P:seryl-tRNA aminoacylation"/>
    <property type="evidence" value="ECO:0007669"/>
    <property type="project" value="UniProtKB-UniRule"/>
</dbReference>
<dbReference type="CDD" id="cd00770">
    <property type="entry name" value="SerRS_core"/>
    <property type="match status" value="1"/>
</dbReference>
<dbReference type="Gene3D" id="3.30.930.10">
    <property type="entry name" value="Bira Bifunctional Protein, Domain 2"/>
    <property type="match status" value="1"/>
</dbReference>
<dbReference type="Gene3D" id="1.10.287.40">
    <property type="entry name" value="Serine-tRNA synthetase, tRNA binding domain"/>
    <property type="match status" value="1"/>
</dbReference>
<dbReference type="HAMAP" id="MF_00176">
    <property type="entry name" value="Ser_tRNA_synth_type1"/>
    <property type="match status" value="1"/>
</dbReference>
<dbReference type="InterPro" id="IPR002314">
    <property type="entry name" value="aa-tRNA-synt_IIb"/>
</dbReference>
<dbReference type="InterPro" id="IPR006195">
    <property type="entry name" value="aa-tRNA-synth_II"/>
</dbReference>
<dbReference type="InterPro" id="IPR045864">
    <property type="entry name" value="aa-tRNA-synth_II/BPL/LPL"/>
</dbReference>
<dbReference type="InterPro" id="IPR002317">
    <property type="entry name" value="Ser-tRNA-ligase_type_1"/>
</dbReference>
<dbReference type="InterPro" id="IPR015866">
    <property type="entry name" value="Ser-tRNA-synth_1_N"/>
</dbReference>
<dbReference type="InterPro" id="IPR042103">
    <property type="entry name" value="SerRS_1_N_sf"/>
</dbReference>
<dbReference type="InterPro" id="IPR033729">
    <property type="entry name" value="SerRS_core"/>
</dbReference>
<dbReference type="InterPro" id="IPR010978">
    <property type="entry name" value="tRNA-bd_arm"/>
</dbReference>
<dbReference type="NCBIfam" id="TIGR00414">
    <property type="entry name" value="serS"/>
    <property type="match status" value="1"/>
</dbReference>
<dbReference type="PANTHER" id="PTHR43697:SF1">
    <property type="entry name" value="SERINE--TRNA LIGASE"/>
    <property type="match status" value="1"/>
</dbReference>
<dbReference type="PANTHER" id="PTHR43697">
    <property type="entry name" value="SERYL-TRNA SYNTHETASE"/>
    <property type="match status" value="1"/>
</dbReference>
<dbReference type="Pfam" id="PF02403">
    <property type="entry name" value="Seryl_tRNA_N"/>
    <property type="match status" value="1"/>
</dbReference>
<dbReference type="Pfam" id="PF00587">
    <property type="entry name" value="tRNA-synt_2b"/>
    <property type="match status" value="1"/>
</dbReference>
<dbReference type="PIRSF" id="PIRSF001529">
    <property type="entry name" value="Ser-tRNA-synth_IIa"/>
    <property type="match status" value="1"/>
</dbReference>
<dbReference type="PRINTS" id="PR00981">
    <property type="entry name" value="TRNASYNTHSER"/>
</dbReference>
<dbReference type="SUPFAM" id="SSF55681">
    <property type="entry name" value="Class II aaRS and biotin synthetases"/>
    <property type="match status" value="1"/>
</dbReference>
<dbReference type="SUPFAM" id="SSF46589">
    <property type="entry name" value="tRNA-binding arm"/>
    <property type="match status" value="1"/>
</dbReference>
<dbReference type="PROSITE" id="PS50862">
    <property type="entry name" value="AA_TRNA_LIGASE_II"/>
    <property type="match status" value="1"/>
</dbReference>